<keyword id="KW-0325">Glycoprotein</keyword>
<keyword id="KW-0333">Golgi apparatus</keyword>
<keyword id="KW-0472">Membrane</keyword>
<keyword id="KW-0653">Protein transport</keyword>
<keyword id="KW-0675">Receptor</keyword>
<keyword id="KW-0677">Repeat</keyword>
<keyword id="KW-0732">Signal</keyword>
<keyword id="KW-0812">Transmembrane</keyword>
<keyword id="KW-1133">Transmembrane helix</keyword>
<keyword id="KW-0813">Transport</keyword>
<comment type="function">
    <text evidence="1">Functions as a sorting receptor in the Golgi compartment required for the intracellular sorting and delivery of soluble vacuolar proteins, like carboxypeptidase Y (CPY) and proteinase A. Executes multiple rounds of sorting by cycling between the late Golgi and a prevacuolar endosome-like compartment (By similarity).</text>
</comment>
<comment type="subcellular location">
    <subcellularLocation>
        <location evidence="1">Golgi apparatus</location>
        <location evidence="1">trans-Golgi network membrane</location>
        <topology evidence="1">Multi-pass membrane protein</topology>
    </subcellularLocation>
    <subcellularLocation>
        <location evidence="1">Prevacuolar compartment membrane</location>
        <topology evidence="1">Multi-pass membrane protein</topology>
    </subcellularLocation>
    <text evidence="1">Cycles between the Golgi apparatus and the prevacuolar compartment.</text>
</comment>
<comment type="similarity">
    <text evidence="3">Belongs to the VPS10-related sortilin family.</text>
</comment>
<protein>
    <recommendedName>
        <fullName>Vacuolar protein sorting/targeting protein 10</fullName>
    </recommendedName>
    <alternativeName>
        <fullName>Carboxypeptidase Y receptor</fullName>
        <shortName>CPY receptor</shortName>
    </alternativeName>
    <alternativeName>
        <fullName>Sortilin VPS10</fullName>
    </alternativeName>
    <alternativeName>
        <fullName>Vacuolar carboxypeptidase sorting receptor VPS10</fullName>
    </alternativeName>
</protein>
<evidence type="ECO:0000250" key="1"/>
<evidence type="ECO:0000255" key="2"/>
<evidence type="ECO:0000305" key="3"/>
<feature type="signal peptide" evidence="2">
    <location>
        <begin position="1"/>
        <end position="25"/>
    </location>
</feature>
<feature type="chain" id="PRO_0000407538" description="Vacuolar protein sorting/targeting protein 10">
    <location>
        <begin position="26"/>
        <end position="1486"/>
    </location>
</feature>
<feature type="topological domain" description="Lumenal" evidence="2">
    <location>
        <begin position="26"/>
        <end position="1349"/>
    </location>
</feature>
<feature type="transmembrane region" description="Helical" evidence="2">
    <location>
        <begin position="1350"/>
        <end position="1370"/>
    </location>
</feature>
<feature type="topological domain" description="Cytoplasmic" evidence="2">
    <location>
        <begin position="1371"/>
        <end position="1401"/>
    </location>
</feature>
<feature type="transmembrane region" description="Helical" evidence="2">
    <location>
        <begin position="1402"/>
        <end position="1422"/>
    </location>
</feature>
<feature type="topological domain" description="Lumenal" evidence="2">
    <location>
        <position position="1423"/>
    </location>
</feature>
<feature type="repeat" description="BNR 1">
    <location>
        <begin position="377"/>
        <end position="386"/>
    </location>
</feature>
<feature type="repeat" description="BNR 2">
    <location>
        <begin position="437"/>
        <end position="447"/>
    </location>
</feature>
<feature type="repeat" description="BNR 3">
    <location>
        <begin position="483"/>
        <end position="493"/>
    </location>
</feature>
<feature type="repeat" description="BNR 4">
    <location>
        <begin position="718"/>
        <end position="728"/>
    </location>
</feature>
<feature type="repeat" description="BNR 5">
    <location>
        <begin position="1100"/>
        <end position="1110"/>
    </location>
</feature>
<feature type="glycosylation site" description="N-linked (GlcNAc...) asparagine" evidence="2">
    <location>
        <position position="296"/>
    </location>
</feature>
<feature type="glycosylation site" description="N-linked (GlcNAc...) asparagine" evidence="2">
    <location>
        <position position="900"/>
    </location>
</feature>
<feature type="glycosylation site" description="N-linked (GlcNAc...) asparagine" evidence="2">
    <location>
        <position position="965"/>
    </location>
</feature>
<accession>D4D4B1</accession>
<sequence length="1486" mass="166914">MIVRSLLLAGSLLLASVVPASFTLAKSDGPQIKVKEFDKVPTDVHYFEDTDTIILSGKKAELYISTDAAASWNLLEGKTGILYPNKYHTQSAVIYGPNRKHWVTFDAAKTWREFEVPDKLAFGGGFMPFTFHGKDAEKVLLSAEECQFMTCRHVTYYTTDGFKTVKRLFEGDMGCFWAVGNPAFGEGEPHLPDKLDDRVFCIWPHATPLDLTRRLVYSDTYFSDRKAVAVEAGGRDIKGVNNMASVKKFLLLAASSVGTSEAAIYVSKDAVHWDRADFYGGPKVRGGKFTVLESTNYSIQVNVASRRSRVPIGSLFTSDSTGTSFTMNLDGVNEDKDMITDFEQVSGIQGIFLVNIVENAEEVKKGATREKKLVSRISFDDGRTFKPLKCGDKELHLHSITRPSNIGRTYSSPAPGLVMGIGNTGDKLGTYETGDTFVSNDAGVTWRKALDKAHKYEFGDQGSLLVAVFDEYKDKIFTDEISYSLNHGKDWKKAKLPHRVTALQLTTTPDSTSLQFLLVAEDEKKKFYVMSIDFSDVHERKCEKKDFERWPARLDEKGEPDCLMGHKQFYKRRKADADCFVKEKFKEPLPETEPCQCTKEDFECAAGFLRNKDYECEPHRKVSPPEGKCKNPDDKFMGPSGYRLIPGDDCLKKGGVDLEKEVERTCKDATKAPVSGQISVETTPFKTKNLNYRYLERSDTSSGDDETVILKTDDGDLFVTRDHGKTWQRGKFKEPISLYIPHKYDNDVIYLLTEGKKAYWSIDRAHTFHSFEGKLPITRTLGTLPLYFHPDHPDWLIWIGGQDCKGKKCTDLAYYSKNRGDEWDLLLRGVGKCMFVGKEGELTADDLIFCSQHEHEDPSKSLRLISSDDMFTKKTSIHFDGKPIVGYAKMSEFIVVATKNGTELSSFTSVDGKTFAHAAFPPNYHIDAEYAYTVLDSSTHSIFLHVTDHPAKMHEFGSILKSNSNGTSYVLSLPNANRNDRDYVDFEKIQVVEGVALANIVINPDEVKGKGQEKKFRTLITHNDGSEWALLPPPKKDVDGKSFDCKVKDKGTDDCALHLHGFTERRENRDSMSSGSAVGLIIGVGNVGSSLTPRAESDTYMSRDAGITWHQIKKGRYQWEFGDQGSIVVVVAEEKPTKVLSYSLDEGETWTDFEFSDKEVTVEDISTVPSDTSRNFILWCRPGSSNEIVAYNVDFSGLKEREKQCVLKKESPEADDYYLWSPKHPMQKNNCLFGHVSMYHRKRPEAKCYNGPKLDRLSSEKKNCECTRQDYECDYNYGRQSDGSCALVKGLKPADPMQICKDDPEAIEYFEPTGYRKLPVSTCEGGHQLDHLVARPCPNKKKEFDEKHPGIGGFGLFFAIFFPVAIATGVGYWAFSKWDGKFGRIRLGESQPESIFSRDSPLISVPVTIVAGTVAVITALPLLFSSLWRSFRGYTRLPGSWWGQRQRPYASRGAFAARRGEYVGVVDDEDELLGAEEFEGDEEEDV</sequence>
<proteinExistence type="inferred from homology"/>
<organism>
    <name type="scientific">Trichophyton verrucosum (strain HKI 0517)</name>
    <dbReference type="NCBI Taxonomy" id="663202"/>
    <lineage>
        <taxon>Eukaryota</taxon>
        <taxon>Fungi</taxon>
        <taxon>Dikarya</taxon>
        <taxon>Ascomycota</taxon>
        <taxon>Pezizomycotina</taxon>
        <taxon>Eurotiomycetes</taxon>
        <taxon>Eurotiomycetidae</taxon>
        <taxon>Onygenales</taxon>
        <taxon>Arthrodermataceae</taxon>
        <taxon>Trichophyton</taxon>
    </lineage>
</organism>
<reference key="1">
    <citation type="journal article" date="2011" name="Genome Biol.">
        <title>Comparative and functional genomics provide insights into the pathogenicity of dermatophytic fungi.</title>
        <authorList>
            <person name="Burmester A."/>
            <person name="Shelest E."/>
            <person name="Gloeckner G."/>
            <person name="Heddergott C."/>
            <person name="Schindler S."/>
            <person name="Staib P."/>
            <person name="Heidel A."/>
            <person name="Felder M."/>
            <person name="Petzold A."/>
            <person name="Szafranski K."/>
            <person name="Feuermann M."/>
            <person name="Pedruzzi I."/>
            <person name="Priebe S."/>
            <person name="Groth M."/>
            <person name="Winkler R."/>
            <person name="Li W."/>
            <person name="Kniemeyer O."/>
            <person name="Schroeckh V."/>
            <person name="Hertweck C."/>
            <person name="Hube B."/>
            <person name="White T.C."/>
            <person name="Platzer M."/>
            <person name="Guthke R."/>
            <person name="Heitman J."/>
            <person name="Woestemeyer J."/>
            <person name="Zipfel P.F."/>
            <person name="Monod M."/>
            <person name="Brakhage A.A."/>
        </authorList>
    </citation>
    <scope>NUCLEOTIDE SEQUENCE [LARGE SCALE GENOMIC DNA]</scope>
    <source>
        <strain>HKI 0517</strain>
    </source>
</reference>
<name>VPS10_TRIVH</name>
<gene>
    <name type="primary">VPS10</name>
    <name type="ORF">TRV_01926</name>
</gene>
<dbReference type="EMBL" id="ACYE01000103">
    <property type="protein sequence ID" value="EFE43258.1"/>
    <property type="molecule type" value="Genomic_DNA"/>
</dbReference>
<dbReference type="RefSeq" id="XP_003023876.1">
    <property type="nucleotide sequence ID" value="XM_003023830.1"/>
</dbReference>
<dbReference type="SMR" id="D4D4B1"/>
<dbReference type="GlyCosmos" id="D4D4B1">
    <property type="glycosylation" value="3 sites, No reported glycans"/>
</dbReference>
<dbReference type="GeneID" id="9582508"/>
<dbReference type="KEGG" id="tve:TRV_01926"/>
<dbReference type="HOGENOM" id="CLU_000700_0_0_1"/>
<dbReference type="OrthoDB" id="1064at34384"/>
<dbReference type="Proteomes" id="UP000008383">
    <property type="component" value="Unassembled WGS sequence"/>
</dbReference>
<dbReference type="GO" id="GO:0005829">
    <property type="term" value="C:cytosol"/>
    <property type="evidence" value="ECO:0007669"/>
    <property type="project" value="GOC"/>
</dbReference>
<dbReference type="GO" id="GO:0005794">
    <property type="term" value="C:Golgi apparatus"/>
    <property type="evidence" value="ECO:0007669"/>
    <property type="project" value="UniProtKB-SubCell"/>
</dbReference>
<dbReference type="GO" id="GO:0016020">
    <property type="term" value="C:membrane"/>
    <property type="evidence" value="ECO:0007669"/>
    <property type="project" value="UniProtKB-KW"/>
</dbReference>
<dbReference type="GO" id="GO:0006895">
    <property type="term" value="P:Golgi to endosome transport"/>
    <property type="evidence" value="ECO:0007669"/>
    <property type="project" value="TreeGrafter"/>
</dbReference>
<dbReference type="GO" id="GO:0006896">
    <property type="term" value="P:Golgi to vacuole transport"/>
    <property type="evidence" value="ECO:0007669"/>
    <property type="project" value="TreeGrafter"/>
</dbReference>
<dbReference type="GO" id="GO:0006623">
    <property type="term" value="P:protein targeting to vacuole"/>
    <property type="evidence" value="ECO:0007669"/>
    <property type="project" value="TreeGrafter"/>
</dbReference>
<dbReference type="FunFam" id="3.30.60.270:FF:000005">
    <property type="entry name" value="Sortilin"/>
    <property type="match status" value="2"/>
</dbReference>
<dbReference type="FunFam" id="2.10.70.80:FF:000001">
    <property type="entry name" value="Sortilin-related VPS10 domain-containing receptor 1"/>
    <property type="match status" value="1"/>
</dbReference>
<dbReference type="Gene3D" id="2.10.70.80">
    <property type="match status" value="2"/>
</dbReference>
<dbReference type="Gene3D" id="3.30.60.270">
    <property type="match status" value="2"/>
</dbReference>
<dbReference type="Gene3D" id="2.130.10.10">
    <property type="entry name" value="YVTN repeat-like/Quinoprotein amine dehydrogenase"/>
    <property type="match status" value="1"/>
</dbReference>
<dbReference type="InterPro" id="IPR031777">
    <property type="entry name" value="Sortilin_C"/>
</dbReference>
<dbReference type="InterPro" id="IPR031778">
    <property type="entry name" value="Sortilin_N"/>
</dbReference>
<dbReference type="InterPro" id="IPR006581">
    <property type="entry name" value="VPS10"/>
</dbReference>
<dbReference type="InterPro" id="IPR050310">
    <property type="entry name" value="VPS10-sortilin"/>
</dbReference>
<dbReference type="InterPro" id="IPR015943">
    <property type="entry name" value="WD40/YVTN_repeat-like_dom_sf"/>
</dbReference>
<dbReference type="PANTHER" id="PTHR12106">
    <property type="entry name" value="SORTILIN RELATED"/>
    <property type="match status" value="1"/>
</dbReference>
<dbReference type="PANTHER" id="PTHR12106:SF27">
    <property type="entry name" value="SORTILIN-RELATED RECEPTOR"/>
    <property type="match status" value="1"/>
</dbReference>
<dbReference type="Pfam" id="PF15902">
    <property type="entry name" value="Sortilin-Vps10"/>
    <property type="match status" value="2"/>
</dbReference>
<dbReference type="Pfam" id="PF15901">
    <property type="entry name" value="Sortilin_C"/>
    <property type="match status" value="2"/>
</dbReference>
<dbReference type="SMART" id="SM00602">
    <property type="entry name" value="VPS10"/>
    <property type="match status" value="2"/>
</dbReference>
<dbReference type="SUPFAM" id="SSF110296">
    <property type="entry name" value="Oligoxyloglucan reducing end-specific cellobiohydrolase"/>
    <property type="match status" value="2"/>
</dbReference>